<accession>Q6IFT6</accession>
<keyword id="KW-1003">Cell membrane</keyword>
<keyword id="KW-0256">Endoplasmic reticulum</keyword>
<keyword id="KW-0325">Glycoprotein</keyword>
<keyword id="KW-0445">Lipid transport</keyword>
<keyword id="KW-0472">Membrane</keyword>
<keyword id="KW-1185">Reference proteome</keyword>
<keyword id="KW-0812">Transmembrane</keyword>
<keyword id="KW-1133">Transmembrane helix</keyword>
<keyword id="KW-0813">Transport</keyword>
<name>ANO7_RAT</name>
<evidence type="ECO:0000250" key="1">
    <source>
        <dbReference type="UniProtKB" id="Q14AT5"/>
    </source>
</evidence>
<evidence type="ECO:0000250" key="2">
    <source>
        <dbReference type="UniProtKB" id="Q6IWH7"/>
    </source>
</evidence>
<evidence type="ECO:0000255" key="3"/>
<evidence type="ECO:0000256" key="4">
    <source>
        <dbReference type="SAM" id="MobiDB-lite"/>
    </source>
</evidence>
<evidence type="ECO:0000305" key="5"/>
<reference key="1">
    <citation type="journal article" date="2004" name="Nature">
        <title>Genome sequence of the Brown Norway rat yields insights into mammalian evolution.</title>
        <authorList>
            <person name="Gibbs R.A."/>
            <person name="Weinstock G.M."/>
            <person name="Metzker M.L."/>
            <person name="Muzny D.M."/>
            <person name="Sodergren E.J."/>
            <person name="Scherer S."/>
            <person name="Scott G."/>
            <person name="Steffen D."/>
            <person name="Worley K.C."/>
            <person name="Burch P.E."/>
            <person name="Okwuonu G."/>
            <person name="Hines S."/>
            <person name="Lewis L."/>
            <person name="Deramo C."/>
            <person name="Delgado O."/>
            <person name="Dugan-Rocha S."/>
            <person name="Miner G."/>
            <person name="Morgan M."/>
            <person name="Hawes A."/>
            <person name="Gill R."/>
            <person name="Holt R.A."/>
            <person name="Adams M.D."/>
            <person name="Amanatides P.G."/>
            <person name="Baden-Tillson H."/>
            <person name="Barnstead M."/>
            <person name="Chin S."/>
            <person name="Evans C.A."/>
            <person name="Ferriera S."/>
            <person name="Fosler C."/>
            <person name="Glodek A."/>
            <person name="Gu Z."/>
            <person name="Jennings D."/>
            <person name="Kraft C.L."/>
            <person name="Nguyen T."/>
            <person name="Pfannkoch C.M."/>
            <person name="Sitter C."/>
            <person name="Sutton G.G."/>
            <person name="Venter J.C."/>
            <person name="Woodage T."/>
            <person name="Smith D."/>
            <person name="Lee H.-M."/>
            <person name="Gustafson E."/>
            <person name="Cahill P."/>
            <person name="Kana A."/>
            <person name="Doucette-Stamm L."/>
            <person name="Weinstock K."/>
            <person name="Fechtel K."/>
            <person name="Weiss R.B."/>
            <person name="Dunn D.M."/>
            <person name="Green E.D."/>
            <person name="Blakesley R.W."/>
            <person name="Bouffard G.G."/>
            <person name="De Jong P.J."/>
            <person name="Osoegawa K."/>
            <person name="Zhu B."/>
            <person name="Marra M."/>
            <person name="Schein J."/>
            <person name="Bosdet I."/>
            <person name="Fjell C."/>
            <person name="Jones S."/>
            <person name="Krzywinski M."/>
            <person name="Mathewson C."/>
            <person name="Siddiqui A."/>
            <person name="Wye N."/>
            <person name="McPherson J."/>
            <person name="Zhao S."/>
            <person name="Fraser C.M."/>
            <person name="Shetty J."/>
            <person name="Shatsman S."/>
            <person name="Geer K."/>
            <person name="Chen Y."/>
            <person name="Abramzon S."/>
            <person name="Nierman W.C."/>
            <person name="Havlak P.H."/>
            <person name="Chen R."/>
            <person name="Durbin K.J."/>
            <person name="Egan A."/>
            <person name="Ren Y."/>
            <person name="Song X.-Z."/>
            <person name="Li B."/>
            <person name="Liu Y."/>
            <person name="Qin X."/>
            <person name="Cawley S."/>
            <person name="Cooney A.J."/>
            <person name="D'Souza L.M."/>
            <person name="Martin K."/>
            <person name="Wu J.Q."/>
            <person name="Gonzalez-Garay M.L."/>
            <person name="Jackson A.R."/>
            <person name="Kalafus K.J."/>
            <person name="McLeod M.P."/>
            <person name="Milosavljevic A."/>
            <person name="Virk D."/>
            <person name="Volkov A."/>
            <person name="Wheeler D.A."/>
            <person name="Zhang Z."/>
            <person name="Bailey J.A."/>
            <person name="Eichler E.E."/>
            <person name="Tuzun E."/>
            <person name="Birney E."/>
            <person name="Mongin E."/>
            <person name="Ureta-Vidal A."/>
            <person name="Woodwark C."/>
            <person name="Zdobnov E."/>
            <person name="Bork P."/>
            <person name="Suyama M."/>
            <person name="Torrents D."/>
            <person name="Alexandersson M."/>
            <person name="Trask B.J."/>
            <person name="Young J.M."/>
            <person name="Huang H."/>
            <person name="Wang H."/>
            <person name="Xing H."/>
            <person name="Daniels S."/>
            <person name="Gietzen D."/>
            <person name="Schmidt J."/>
            <person name="Stevens K."/>
            <person name="Vitt U."/>
            <person name="Wingrove J."/>
            <person name="Camara F."/>
            <person name="Mar Alba M."/>
            <person name="Abril J.F."/>
            <person name="Guigo R."/>
            <person name="Smit A."/>
            <person name="Dubchak I."/>
            <person name="Rubin E.M."/>
            <person name="Couronne O."/>
            <person name="Poliakov A."/>
            <person name="Huebner N."/>
            <person name="Ganten D."/>
            <person name="Goesele C."/>
            <person name="Hummel O."/>
            <person name="Kreitler T."/>
            <person name="Lee Y.-A."/>
            <person name="Monti J."/>
            <person name="Schulz H."/>
            <person name="Zimdahl H."/>
            <person name="Himmelbauer H."/>
            <person name="Lehrach H."/>
            <person name="Jacob H.J."/>
            <person name="Bromberg S."/>
            <person name="Gullings-Handley J."/>
            <person name="Jensen-Seaman M.I."/>
            <person name="Kwitek A.E."/>
            <person name="Lazar J."/>
            <person name="Pasko D."/>
            <person name="Tonellato P.J."/>
            <person name="Twigger S."/>
            <person name="Ponting C.P."/>
            <person name="Duarte J.M."/>
            <person name="Rice S."/>
            <person name="Goodstadt L."/>
            <person name="Beatson S.A."/>
            <person name="Emes R.D."/>
            <person name="Winter E.E."/>
            <person name="Webber C."/>
            <person name="Brandt P."/>
            <person name="Nyakatura G."/>
            <person name="Adetobi M."/>
            <person name="Chiaromonte F."/>
            <person name="Elnitski L."/>
            <person name="Eswara P."/>
            <person name="Hardison R.C."/>
            <person name="Hou M."/>
            <person name="Kolbe D."/>
            <person name="Makova K."/>
            <person name="Miller W."/>
            <person name="Nekrutenko A."/>
            <person name="Riemer C."/>
            <person name="Schwartz S."/>
            <person name="Taylor J."/>
            <person name="Yang S."/>
            <person name="Zhang Y."/>
            <person name="Lindpaintner K."/>
            <person name="Andrews T.D."/>
            <person name="Caccamo M."/>
            <person name="Clamp M."/>
            <person name="Clarke L."/>
            <person name="Curwen V."/>
            <person name="Durbin R.M."/>
            <person name="Eyras E."/>
            <person name="Searle S.M."/>
            <person name="Cooper G.M."/>
            <person name="Batzoglou S."/>
            <person name="Brudno M."/>
            <person name="Sidow A."/>
            <person name="Stone E.A."/>
            <person name="Payseur B.A."/>
            <person name="Bourque G."/>
            <person name="Lopez-Otin C."/>
            <person name="Puente X.S."/>
            <person name="Chakrabarti K."/>
            <person name="Chatterji S."/>
            <person name="Dewey C."/>
            <person name="Pachter L."/>
            <person name="Bray N."/>
            <person name="Yap V.B."/>
            <person name="Caspi A."/>
            <person name="Tesler G."/>
            <person name="Pevzner P.A."/>
            <person name="Haussler D."/>
            <person name="Roskin K.M."/>
            <person name="Baertsch R."/>
            <person name="Clawson H."/>
            <person name="Furey T.S."/>
            <person name="Hinrichs A.S."/>
            <person name="Karolchik D."/>
            <person name="Kent W.J."/>
            <person name="Rosenbloom K.R."/>
            <person name="Trumbower H."/>
            <person name="Weirauch M."/>
            <person name="Cooper D.N."/>
            <person name="Stenson P.D."/>
            <person name="Ma B."/>
            <person name="Brent M."/>
            <person name="Arumugam M."/>
            <person name="Shteynberg D."/>
            <person name="Copley R.R."/>
            <person name="Taylor M.S."/>
            <person name="Riethman H."/>
            <person name="Mudunuri U."/>
            <person name="Peterson J."/>
            <person name="Guyer M."/>
            <person name="Felsenfeld A."/>
            <person name="Old S."/>
            <person name="Mockrin S."/>
            <person name="Collins F.S."/>
        </authorList>
    </citation>
    <scope>NUCLEOTIDE SEQUENCE [LARGE SCALE GENOMIC DNA]</scope>
    <source>
        <strain>Brown Norway</strain>
    </source>
</reference>
<reference key="2">
    <citation type="journal article" date="2004" name="Proc. Natl. Acad. Sci. U.S.A.">
        <title>NGEP, a gene encoding a membrane protein detected only in prostate cancer and normal prostate.</title>
        <authorList>
            <person name="Bera T.K."/>
            <person name="Das S."/>
            <person name="Maeda H."/>
            <person name="Beers R."/>
            <person name="Wolfgang C.D."/>
            <person name="Kumar V."/>
            <person name="Hahn Y."/>
            <person name="Lee B."/>
            <person name="Pastan I."/>
        </authorList>
    </citation>
    <scope>IDENTIFICATION</scope>
</reference>
<protein>
    <recommendedName>
        <fullName>Anoctamin-7</fullName>
    </recommendedName>
    <alternativeName>
        <fullName>New gene expressed in prostate homolog</fullName>
    </alternativeName>
    <alternativeName>
        <fullName>Transmembrane protein 16G</fullName>
    </alternativeName>
</protein>
<organism>
    <name type="scientific">Rattus norvegicus</name>
    <name type="common">Rat</name>
    <dbReference type="NCBI Taxonomy" id="10116"/>
    <lineage>
        <taxon>Eukaryota</taxon>
        <taxon>Metazoa</taxon>
        <taxon>Chordata</taxon>
        <taxon>Craniata</taxon>
        <taxon>Vertebrata</taxon>
        <taxon>Euteleostomi</taxon>
        <taxon>Mammalia</taxon>
        <taxon>Eutheria</taxon>
        <taxon>Euarchontoglires</taxon>
        <taxon>Glires</taxon>
        <taxon>Rodentia</taxon>
        <taxon>Myomorpha</taxon>
        <taxon>Muroidea</taxon>
        <taxon>Muridae</taxon>
        <taxon>Murinae</taxon>
        <taxon>Rattus</taxon>
    </lineage>
</organism>
<comment type="function">
    <text evidence="1 2">Has calcium-dependent phospholipid scramblase activity; scrambles phosphatidylserine, phosphatidylcholine and galactosylceramide (By similarity). Does not exhibit calcium-activated chloride channel (CaCC) activity (By similarity). May play a role in cell-cell interactions (By similarity).</text>
</comment>
<comment type="catalytic activity">
    <reaction evidence="1">
        <text>a 1,2-diacyl-sn-glycero-3-phospho-L-serine(in) = a 1,2-diacyl-sn-glycero-3-phospho-L-serine(out)</text>
        <dbReference type="Rhea" id="RHEA:38663"/>
        <dbReference type="ChEBI" id="CHEBI:57262"/>
    </reaction>
    <physiologicalReaction direction="left-to-right" evidence="1">
        <dbReference type="Rhea" id="RHEA:38664"/>
    </physiologicalReaction>
</comment>
<comment type="catalytic activity">
    <reaction evidence="1">
        <text>a beta-D-galactosyl-(1&lt;-&gt;1')-N-acylsphing-4-enine(out) = a beta-D-galactosyl-(1&lt;-&gt;1')-N-acylsphing-4-enine(in)</text>
        <dbReference type="Rhea" id="RHEA:38899"/>
        <dbReference type="ChEBI" id="CHEBI:18390"/>
    </reaction>
    <physiologicalReaction direction="left-to-right" evidence="1">
        <dbReference type="Rhea" id="RHEA:38900"/>
    </physiologicalReaction>
</comment>
<comment type="catalytic activity">
    <reaction evidence="1">
        <text>a 1,2-diacyl-sn-glycero-3-phosphocholine(in) = a 1,2-diacyl-sn-glycero-3-phosphocholine(out)</text>
        <dbReference type="Rhea" id="RHEA:38571"/>
        <dbReference type="ChEBI" id="CHEBI:57643"/>
    </reaction>
    <physiologicalReaction direction="right-to-left" evidence="1">
        <dbReference type="Rhea" id="RHEA:38573"/>
    </physiologicalReaction>
</comment>
<comment type="subcellular location">
    <subcellularLocation>
        <location evidence="2">Cell membrane</location>
        <topology evidence="2">Multi-pass membrane protein</topology>
    </subcellularLocation>
    <subcellularLocation>
        <location evidence="2">Endoplasmic reticulum</location>
    </subcellularLocation>
    <text evidence="2">Concentrates at sites of cell-cell contact. Shows an intracellular localization.</text>
</comment>
<comment type="miscellaneous">
    <text>The term 'anoctamin' was coined because these channels are anion selective and have eight (OCT) transmembrane segments. There is some dissatisfaction in the field with the Ano nomenclature because it is not certain that all the members of this family are anion channels or have the 8-transmembrane topology.</text>
</comment>
<comment type="similarity">
    <text evidence="5">Belongs to the anoctamin family.</text>
</comment>
<proteinExistence type="evidence at transcript level"/>
<feature type="chain" id="PRO_0000289328" description="Anoctamin-7">
    <location>
        <begin position="1"/>
        <end position="860"/>
    </location>
</feature>
<feature type="topological domain" description="Cytoplasmic" evidence="3">
    <location>
        <begin position="1"/>
        <end position="297"/>
    </location>
</feature>
<feature type="transmembrane region" description="Helical" evidence="3">
    <location>
        <begin position="298"/>
        <end position="318"/>
    </location>
</feature>
<feature type="topological domain" description="Extracellular" evidence="3">
    <location>
        <begin position="319"/>
        <end position="362"/>
    </location>
</feature>
<feature type="transmembrane region" description="Helical" evidence="3">
    <location>
        <begin position="363"/>
        <end position="383"/>
    </location>
</feature>
<feature type="topological domain" description="Cytoplasmic" evidence="3">
    <location>
        <begin position="384"/>
        <end position="441"/>
    </location>
</feature>
<feature type="transmembrane region" description="Helical" evidence="3">
    <location>
        <begin position="442"/>
        <end position="462"/>
    </location>
</feature>
<feature type="topological domain" description="Extracellular" evidence="3">
    <location>
        <begin position="463"/>
        <end position="492"/>
    </location>
</feature>
<feature type="transmembrane region" description="Helical" evidence="3">
    <location>
        <begin position="493"/>
        <end position="513"/>
    </location>
</feature>
<feature type="topological domain" description="Cytoplasmic" evidence="3">
    <location>
        <begin position="514"/>
        <end position="530"/>
    </location>
</feature>
<feature type="transmembrane region" description="Helical" evidence="3">
    <location>
        <begin position="531"/>
        <end position="551"/>
    </location>
</feature>
<feature type="topological domain" description="Extracellular" evidence="3">
    <location>
        <begin position="552"/>
        <end position="652"/>
    </location>
</feature>
<feature type="transmembrane region" description="Helical" evidence="3">
    <location>
        <begin position="653"/>
        <end position="673"/>
    </location>
</feature>
<feature type="topological domain" description="Cytoplasmic" evidence="3">
    <location>
        <begin position="674"/>
        <end position="701"/>
    </location>
</feature>
<feature type="transmembrane region" description="Helical" evidence="3">
    <location>
        <begin position="702"/>
        <end position="722"/>
    </location>
</feature>
<feature type="topological domain" description="Extracellular" evidence="3">
    <location>
        <begin position="723"/>
        <end position="779"/>
    </location>
</feature>
<feature type="transmembrane region" description="Helical" evidence="3">
    <location>
        <begin position="780"/>
        <end position="800"/>
    </location>
</feature>
<feature type="topological domain" description="Cytoplasmic" evidence="3">
    <location>
        <begin position="801"/>
        <end position="860"/>
    </location>
</feature>
<feature type="region of interest" description="Disordered" evidence="4">
    <location>
        <begin position="24"/>
        <end position="50"/>
    </location>
</feature>
<feature type="glycosylation site" description="N-linked (GlcNAc...) asparagine" evidence="3">
    <location>
        <position position="747"/>
    </location>
</feature>
<feature type="glycosylation site" description="N-linked (GlcNAc...) asparagine" evidence="3">
    <location>
        <position position="762"/>
    </location>
</feature>
<gene>
    <name type="primary">Ano7</name>
    <name type="synonym">Ngep</name>
    <name type="synonym">Tmem16g</name>
</gene>
<dbReference type="EMBL" id="AABR03068351">
    <property type="status" value="NOT_ANNOTATED_CDS"/>
    <property type="molecule type" value="Genomic_DNA"/>
</dbReference>
<dbReference type="EMBL" id="AABR03069029">
    <property type="status" value="NOT_ANNOTATED_CDS"/>
    <property type="molecule type" value="Genomic_DNA"/>
</dbReference>
<dbReference type="EMBL" id="AABR03070767">
    <property type="status" value="NOT_ANNOTATED_CDS"/>
    <property type="molecule type" value="Genomic_DNA"/>
</dbReference>
<dbReference type="EMBL" id="BK004074">
    <property type="protein sequence ID" value="DAA04565.1"/>
    <property type="molecule type" value="mRNA"/>
</dbReference>
<dbReference type="RefSeq" id="NP_001004071.1">
    <property type="nucleotide sequence ID" value="NM_001004071.1"/>
</dbReference>
<dbReference type="SMR" id="Q6IFT6"/>
<dbReference type="FunCoup" id="Q6IFT6">
    <property type="interactions" value="13"/>
</dbReference>
<dbReference type="STRING" id="10116.ENSRNOP00000033330"/>
<dbReference type="CarbonylDB" id="Q6IFT6"/>
<dbReference type="GlyCosmos" id="Q6IFT6">
    <property type="glycosylation" value="2 sites, No reported glycans"/>
</dbReference>
<dbReference type="GlyGen" id="Q6IFT6">
    <property type="glycosylation" value="2 sites"/>
</dbReference>
<dbReference type="PhosphoSitePlus" id="Q6IFT6"/>
<dbReference type="PaxDb" id="10116-ENSRNOP00000033330"/>
<dbReference type="Ensembl" id="ENSRNOT00000033233.3">
    <property type="protein sequence ID" value="ENSRNOP00000033330.4"/>
    <property type="gene ID" value="ENSRNOG00000023427.3"/>
</dbReference>
<dbReference type="GeneID" id="367318"/>
<dbReference type="KEGG" id="rno:367318"/>
<dbReference type="AGR" id="RGD:1302987"/>
<dbReference type="CTD" id="50636"/>
<dbReference type="RGD" id="1302987">
    <property type="gene designation" value="Ano7"/>
</dbReference>
<dbReference type="eggNOG" id="KOG2514">
    <property type="taxonomic scope" value="Eukaryota"/>
</dbReference>
<dbReference type="GeneTree" id="ENSGT00940000158551"/>
<dbReference type="HOGENOM" id="CLU_006685_0_1_1"/>
<dbReference type="InParanoid" id="Q6IFT6"/>
<dbReference type="OMA" id="GLYCQDQ"/>
<dbReference type="OrthoDB" id="296386at2759"/>
<dbReference type="PhylomeDB" id="Q6IFT6"/>
<dbReference type="TreeFam" id="TF314265"/>
<dbReference type="Reactome" id="R-RNO-2672351">
    <property type="pathway name" value="Stimuli-sensing channels"/>
</dbReference>
<dbReference type="PRO" id="PR:Q6IFT6"/>
<dbReference type="Proteomes" id="UP000002494">
    <property type="component" value="Chromosome 9"/>
</dbReference>
<dbReference type="Bgee" id="ENSRNOG00000023427">
    <property type="expression patterns" value="Expressed in jejunum and 5 other cell types or tissues"/>
</dbReference>
<dbReference type="GO" id="GO:0005783">
    <property type="term" value="C:endoplasmic reticulum"/>
    <property type="evidence" value="ECO:0000250"/>
    <property type="project" value="UniProtKB"/>
</dbReference>
<dbReference type="GO" id="GO:0005886">
    <property type="term" value="C:plasma membrane"/>
    <property type="evidence" value="ECO:0000266"/>
    <property type="project" value="RGD"/>
</dbReference>
<dbReference type="GO" id="GO:0005254">
    <property type="term" value="F:chloride channel activity"/>
    <property type="evidence" value="ECO:0000318"/>
    <property type="project" value="GO_Central"/>
</dbReference>
<dbReference type="GO" id="GO:0005229">
    <property type="term" value="F:intracellularly calcium-gated chloride channel activity"/>
    <property type="evidence" value="ECO:0000266"/>
    <property type="project" value="RGD"/>
</dbReference>
<dbReference type="GO" id="GO:0017128">
    <property type="term" value="F:phospholipid scramblase activity"/>
    <property type="evidence" value="ECO:0000266"/>
    <property type="project" value="RGD"/>
</dbReference>
<dbReference type="GO" id="GO:0046983">
    <property type="term" value="F:protein dimerization activity"/>
    <property type="evidence" value="ECO:0007669"/>
    <property type="project" value="InterPro"/>
</dbReference>
<dbReference type="GO" id="GO:0061591">
    <property type="term" value="P:calcium activated galactosylceramide scrambling"/>
    <property type="evidence" value="ECO:0000266"/>
    <property type="project" value="RGD"/>
</dbReference>
<dbReference type="GO" id="GO:0061590">
    <property type="term" value="P:calcium activated phosphatidylcholine scrambling"/>
    <property type="evidence" value="ECO:0000266"/>
    <property type="project" value="RGD"/>
</dbReference>
<dbReference type="GO" id="GO:0061589">
    <property type="term" value="P:calcium activated phosphatidylserine scrambling"/>
    <property type="evidence" value="ECO:0000266"/>
    <property type="project" value="RGD"/>
</dbReference>
<dbReference type="GO" id="GO:0061588">
    <property type="term" value="P:calcium activated phospholipid scrambling"/>
    <property type="evidence" value="ECO:0000318"/>
    <property type="project" value="GO_Central"/>
</dbReference>
<dbReference type="GO" id="GO:1902476">
    <property type="term" value="P:chloride transmembrane transport"/>
    <property type="evidence" value="ECO:0000266"/>
    <property type="project" value="RGD"/>
</dbReference>
<dbReference type="GO" id="GO:0051649">
    <property type="term" value="P:establishment of localization in cell"/>
    <property type="evidence" value="ECO:0000266"/>
    <property type="project" value="RGD"/>
</dbReference>
<dbReference type="InterPro" id="IPR032394">
    <property type="entry name" value="Anoct_dimer"/>
</dbReference>
<dbReference type="InterPro" id="IPR007632">
    <property type="entry name" value="Anoctamin"/>
</dbReference>
<dbReference type="InterPro" id="IPR049452">
    <property type="entry name" value="Anoctamin_TM"/>
</dbReference>
<dbReference type="PANTHER" id="PTHR12308">
    <property type="entry name" value="ANOCTAMIN"/>
    <property type="match status" value="1"/>
</dbReference>
<dbReference type="PANTHER" id="PTHR12308:SF22">
    <property type="entry name" value="ANOCTAMIN-7"/>
    <property type="match status" value="1"/>
</dbReference>
<dbReference type="Pfam" id="PF16178">
    <property type="entry name" value="Anoct_dimer"/>
    <property type="match status" value="1"/>
</dbReference>
<dbReference type="Pfam" id="PF04547">
    <property type="entry name" value="Anoctamin"/>
    <property type="match status" value="1"/>
</dbReference>
<sequence length="860" mass="97170">MLRKQAGEEDSVVLIDMTSPEAGNGCSYGSTAQASEAGKQQVAPSRVGSSANPPIDFVLVWEEDLRSRENPTQDKTDTHEIWRETFLENLRVAGLKIDQRDVQDEAAAVHYILLSAPWAVLCYYAEDLRLKLPLQELPNQASNWSATLLEWLGIPNILLENVPDTPPEYYSCQFKASKLQWFLGSDNQDTFFTSTKRHQILFEILAKTPYGHQKKGLFGIDQLLAEGVFSAAFPLHDGPFSVVPESSQVLGLTQRQVLFKHWARWGKWRKYQPLDHVRRYFGEKVALYFAWLGFYTGWLLPAAVVGTVVFLAGCFLVFSDVPTQELCHSSDTFDMCPLCSDCSFWLLSSACTLAQAGRLFDHGGTVFFSLFMALWAVLLLEYWKRKNATLAYRWDCSDYEDIEERPRPQFAATAPMTALNPITGEDEPYFPEKNRVRRMLAGSVVLLMMVAVVIMCLVSIILYRAVMAIIVSKSNNAFLSAWASRIASLTGSVVNLVFILILSKVYVILAQVLTRWEMHRTQTAFEDAFTLKVFIFQFVNFYASPVYIAFFKGRFVGYPGNYHTLFGVRNEECPAGGCLSELAQELLVIMVGKQIINNVQEVLVPKLKGCWQKLCSRRKKAGMGANPAPWEADYELLPCEGLFHEYLEMVLQFGFVTIFVAACPLAPLFALLNNWVEIRLDARKFVCEYRRPVAERAQDIGIWFHILAGLTHLAVISNAFLLAFSSDFLPRVYYSWTRAPDLRGFLNFTLARAPPTFTSAHNRTCRYRAFRDDDGHYSPTYWTLLAIRLAFVIVFEHVVFSTGRFLDLLVPDIPESVEIKVKREYYLAKQALADNEALLGATGVKGEQPPSSEPSLGLPA</sequence>